<proteinExistence type="inferred from homology"/>
<organism>
    <name type="scientific">Vibrio vulnificus (strain YJ016)</name>
    <dbReference type="NCBI Taxonomy" id="196600"/>
    <lineage>
        <taxon>Bacteria</taxon>
        <taxon>Pseudomonadati</taxon>
        <taxon>Pseudomonadota</taxon>
        <taxon>Gammaproteobacteria</taxon>
        <taxon>Vibrionales</taxon>
        <taxon>Vibrionaceae</taxon>
        <taxon>Vibrio</taxon>
    </lineage>
</organism>
<protein>
    <recommendedName>
        <fullName evidence="1">Chaperonin GroEL 1</fullName>
        <ecNumber evidence="1">5.6.1.7</ecNumber>
    </recommendedName>
    <alternativeName>
        <fullName evidence="1">60 kDa chaperonin 1</fullName>
    </alternativeName>
    <alternativeName>
        <fullName evidence="1">Chaperonin-60 1</fullName>
        <shortName evidence="1">Cpn60 1</shortName>
    </alternativeName>
</protein>
<comment type="function">
    <text evidence="1">Together with its co-chaperonin GroES, plays an essential role in assisting protein folding. The GroEL-GroES system forms a nano-cage that allows encapsulation of the non-native substrate proteins and provides a physical environment optimized to promote and accelerate protein folding.</text>
</comment>
<comment type="catalytic activity">
    <reaction evidence="1">
        <text>ATP + H2O + a folded polypeptide = ADP + phosphate + an unfolded polypeptide.</text>
        <dbReference type="EC" id="5.6.1.7"/>
    </reaction>
</comment>
<comment type="subunit">
    <text evidence="1">Forms a cylinder of 14 subunits composed of two heptameric rings stacked back-to-back. Interacts with the co-chaperonin GroES.</text>
</comment>
<comment type="subcellular location">
    <subcellularLocation>
        <location evidence="1">Cytoplasm</location>
    </subcellularLocation>
</comment>
<comment type="similarity">
    <text evidence="1">Belongs to the chaperonin (HSP60) family.</text>
</comment>
<accession>Q7M7I7</accession>
<keyword id="KW-0067">ATP-binding</keyword>
<keyword id="KW-0143">Chaperone</keyword>
<keyword id="KW-0963">Cytoplasm</keyword>
<keyword id="KW-0413">Isomerase</keyword>
<keyword id="KW-0547">Nucleotide-binding</keyword>
<dbReference type="EC" id="5.6.1.7" evidence="1"/>
<dbReference type="EMBL" id="BA000037">
    <property type="protein sequence ID" value="BAC95870.1"/>
    <property type="molecule type" value="Genomic_DNA"/>
</dbReference>
<dbReference type="SMR" id="Q7M7I7"/>
<dbReference type="STRING" id="672.VV93_v1c28290"/>
<dbReference type="KEGG" id="vvy:VV3106"/>
<dbReference type="eggNOG" id="COG0459">
    <property type="taxonomic scope" value="Bacteria"/>
</dbReference>
<dbReference type="HOGENOM" id="CLU_016503_3_0_6"/>
<dbReference type="Proteomes" id="UP000002675">
    <property type="component" value="Chromosome I"/>
</dbReference>
<dbReference type="GO" id="GO:0005737">
    <property type="term" value="C:cytoplasm"/>
    <property type="evidence" value="ECO:0007669"/>
    <property type="project" value="UniProtKB-SubCell"/>
</dbReference>
<dbReference type="GO" id="GO:0005524">
    <property type="term" value="F:ATP binding"/>
    <property type="evidence" value="ECO:0007669"/>
    <property type="project" value="UniProtKB-UniRule"/>
</dbReference>
<dbReference type="GO" id="GO:0140662">
    <property type="term" value="F:ATP-dependent protein folding chaperone"/>
    <property type="evidence" value="ECO:0007669"/>
    <property type="project" value="InterPro"/>
</dbReference>
<dbReference type="GO" id="GO:0016853">
    <property type="term" value="F:isomerase activity"/>
    <property type="evidence" value="ECO:0007669"/>
    <property type="project" value="UniProtKB-KW"/>
</dbReference>
<dbReference type="GO" id="GO:0051082">
    <property type="term" value="F:unfolded protein binding"/>
    <property type="evidence" value="ECO:0007669"/>
    <property type="project" value="UniProtKB-UniRule"/>
</dbReference>
<dbReference type="GO" id="GO:0042026">
    <property type="term" value="P:protein refolding"/>
    <property type="evidence" value="ECO:0007669"/>
    <property type="project" value="UniProtKB-UniRule"/>
</dbReference>
<dbReference type="CDD" id="cd03344">
    <property type="entry name" value="GroEL"/>
    <property type="match status" value="1"/>
</dbReference>
<dbReference type="FunFam" id="1.10.560.10:FF:000001">
    <property type="entry name" value="60 kDa chaperonin"/>
    <property type="match status" value="1"/>
</dbReference>
<dbReference type="FunFam" id="3.50.7.10:FF:000001">
    <property type="entry name" value="60 kDa chaperonin"/>
    <property type="match status" value="1"/>
</dbReference>
<dbReference type="Gene3D" id="3.50.7.10">
    <property type="entry name" value="GroEL"/>
    <property type="match status" value="1"/>
</dbReference>
<dbReference type="Gene3D" id="1.10.560.10">
    <property type="entry name" value="GroEL-like equatorial domain"/>
    <property type="match status" value="1"/>
</dbReference>
<dbReference type="Gene3D" id="3.30.260.10">
    <property type="entry name" value="TCP-1-like chaperonin intermediate domain"/>
    <property type="match status" value="1"/>
</dbReference>
<dbReference type="HAMAP" id="MF_00600">
    <property type="entry name" value="CH60"/>
    <property type="match status" value="1"/>
</dbReference>
<dbReference type="InterPro" id="IPR018370">
    <property type="entry name" value="Chaperonin_Cpn60_CS"/>
</dbReference>
<dbReference type="InterPro" id="IPR001844">
    <property type="entry name" value="Cpn60/GroEL"/>
</dbReference>
<dbReference type="InterPro" id="IPR002423">
    <property type="entry name" value="Cpn60/GroEL/TCP-1"/>
</dbReference>
<dbReference type="InterPro" id="IPR027409">
    <property type="entry name" value="GroEL-like_apical_dom_sf"/>
</dbReference>
<dbReference type="InterPro" id="IPR027413">
    <property type="entry name" value="GROEL-like_equatorial_sf"/>
</dbReference>
<dbReference type="InterPro" id="IPR027410">
    <property type="entry name" value="TCP-1-like_intermed_sf"/>
</dbReference>
<dbReference type="NCBIfam" id="TIGR02348">
    <property type="entry name" value="GroEL"/>
    <property type="match status" value="1"/>
</dbReference>
<dbReference type="NCBIfam" id="NF000592">
    <property type="entry name" value="PRK00013.1"/>
    <property type="match status" value="1"/>
</dbReference>
<dbReference type="NCBIfam" id="NF009487">
    <property type="entry name" value="PRK12849.1"/>
    <property type="match status" value="1"/>
</dbReference>
<dbReference type="NCBIfam" id="NF009488">
    <property type="entry name" value="PRK12850.1"/>
    <property type="match status" value="1"/>
</dbReference>
<dbReference type="NCBIfam" id="NF009489">
    <property type="entry name" value="PRK12851.1"/>
    <property type="match status" value="1"/>
</dbReference>
<dbReference type="PANTHER" id="PTHR45633">
    <property type="entry name" value="60 KDA HEAT SHOCK PROTEIN, MITOCHONDRIAL"/>
    <property type="match status" value="1"/>
</dbReference>
<dbReference type="Pfam" id="PF00118">
    <property type="entry name" value="Cpn60_TCP1"/>
    <property type="match status" value="1"/>
</dbReference>
<dbReference type="PRINTS" id="PR00298">
    <property type="entry name" value="CHAPERONIN60"/>
</dbReference>
<dbReference type="SUPFAM" id="SSF52029">
    <property type="entry name" value="GroEL apical domain-like"/>
    <property type="match status" value="1"/>
</dbReference>
<dbReference type="SUPFAM" id="SSF48592">
    <property type="entry name" value="GroEL equatorial domain-like"/>
    <property type="match status" value="2"/>
</dbReference>
<dbReference type="PROSITE" id="PS00296">
    <property type="entry name" value="CHAPERONINS_CPN60"/>
    <property type="match status" value="1"/>
</dbReference>
<reference key="1">
    <citation type="journal article" date="2003" name="Genome Res.">
        <title>Comparative genome analysis of Vibrio vulnificus, a marine pathogen.</title>
        <authorList>
            <person name="Chen C.-Y."/>
            <person name="Wu K.-M."/>
            <person name="Chang Y.-C."/>
            <person name="Chang C.-H."/>
            <person name="Tsai H.-C."/>
            <person name="Liao T.-L."/>
            <person name="Liu Y.-M."/>
            <person name="Chen H.-J."/>
            <person name="Shen A.B.-T."/>
            <person name="Li J.-C."/>
            <person name="Su T.-L."/>
            <person name="Shao C.-P."/>
            <person name="Lee C.-T."/>
            <person name="Hor L.-I."/>
            <person name="Tsai S.-F."/>
        </authorList>
    </citation>
    <scope>NUCLEOTIDE SEQUENCE [LARGE SCALE GENOMIC DNA]</scope>
    <source>
        <strain>YJ016</strain>
    </source>
</reference>
<sequence>MAAKDVKFGNDARVKMLEGVNILADAVKVTLGPKGRNVVLDKSFGAPTITKDGVSVAREIELEDKFQNMGAQMVKQVASQANDVAGDGTTTATVLAQAIVNEGLKAVAAGMNPMDLKRGIDKAVAAAVEELKALSKDCSTSTEIEQVGTISANSDSSVGKIIAEAMEKVGRDGVITVEEGQALHDELDVVEGMQFDRGYLSPYFINNQESGSVELESPFILLVDKKISNIRELLPALEAVAKASRPLLIIAEDVEGEALATLVVNNMRGIVKVAAVKAPGFGDRRKAMLQDIAILTGGTVISEEVGLELEKATLEDLGQAKRVSITKENTTIIDGVGEEAMIQGRVAQIRQQIEDATSDYDKEKLQERVAKLAGGVAVIKVGAATEVEMKEKKDRVEDALHATRAAVEEGIVAGGGVALIRAASKIVDLQGDNEEQNVGIRVALRAMEAPLRQITKNAGDEESVVANNVRAGEGSYGYNAATGVYGDMLEMGILDPTKVTRSALQFAASVAGLMITTEAMVTDLPQKDSGMPDMGGMGGMGGMGMM</sequence>
<gene>
    <name evidence="1" type="primary">groEL1</name>
    <name evidence="1" type="synonym">groL1</name>
    <name type="ordered locus">VV3106</name>
</gene>
<feature type="chain" id="PRO_0000063601" description="Chaperonin GroEL 1">
    <location>
        <begin position="1"/>
        <end position="546"/>
    </location>
</feature>
<feature type="binding site" evidence="1">
    <location>
        <begin position="30"/>
        <end position="33"/>
    </location>
    <ligand>
        <name>ATP</name>
        <dbReference type="ChEBI" id="CHEBI:30616"/>
    </ligand>
</feature>
<feature type="binding site" evidence="1">
    <location>
        <position position="51"/>
    </location>
    <ligand>
        <name>ATP</name>
        <dbReference type="ChEBI" id="CHEBI:30616"/>
    </ligand>
</feature>
<feature type="binding site" evidence="1">
    <location>
        <begin position="87"/>
        <end position="91"/>
    </location>
    <ligand>
        <name>ATP</name>
        <dbReference type="ChEBI" id="CHEBI:30616"/>
    </ligand>
</feature>
<feature type="binding site" evidence="1">
    <location>
        <position position="415"/>
    </location>
    <ligand>
        <name>ATP</name>
        <dbReference type="ChEBI" id="CHEBI:30616"/>
    </ligand>
</feature>
<feature type="binding site" evidence="1">
    <location>
        <begin position="479"/>
        <end position="481"/>
    </location>
    <ligand>
        <name>ATP</name>
        <dbReference type="ChEBI" id="CHEBI:30616"/>
    </ligand>
</feature>
<feature type="binding site" evidence="1">
    <location>
        <position position="495"/>
    </location>
    <ligand>
        <name>ATP</name>
        <dbReference type="ChEBI" id="CHEBI:30616"/>
    </ligand>
</feature>
<name>CH601_VIBVY</name>
<evidence type="ECO:0000255" key="1">
    <source>
        <dbReference type="HAMAP-Rule" id="MF_00600"/>
    </source>
</evidence>